<sequence length="327" mass="35262">MDAPDAPHTPKYMDGGNTAASVTPGINIPGKSAFVELQQHAAAGYGGIRSTYQHFGPQGGQDSGFPSPRSALGYPFPPMHQNSYSGYHLGSYAPPCASPPKDDFSISDKCEDSGLRVNGKGKKMRKPRTIYSSLQLQQLNRRFQRTQYLALPERAELAASLGLTQTQVKIWFQNRRSKYKKMMKAAQGPGTNSGMPLGGGGPNPGQHSPNQMHSGGNNGGGSNSGSPSHYLPPGHSPTPSSTPVSELSPEFPPTGLSPPTQAPWDQKPHWIDHKPPPQMTPQPPHPAATLHPQTHHHNPPPQMGGYVPQYWYQPETNPSLVTVWPAV</sequence>
<feature type="chain" id="PRO_0000049055" description="Homeotic protein distal-less">
    <location>
        <begin position="1"/>
        <end position="327"/>
    </location>
</feature>
<feature type="DNA-binding region" description="Homeobox" evidence="1">
    <location>
        <begin position="124"/>
        <end position="183"/>
    </location>
</feature>
<feature type="region of interest" description="Disordered" evidence="2">
    <location>
        <begin position="181"/>
        <end position="303"/>
    </location>
</feature>
<feature type="compositionally biased region" description="Low complexity" evidence="2">
    <location>
        <begin position="231"/>
        <end position="249"/>
    </location>
</feature>
<feature type="compositionally biased region" description="Basic and acidic residues" evidence="2">
    <location>
        <begin position="266"/>
        <end position="275"/>
    </location>
</feature>
<feature type="compositionally biased region" description="Pro residues" evidence="2">
    <location>
        <begin position="276"/>
        <end position="286"/>
    </location>
</feature>
<feature type="splice variant" id="VSP_013806" description="In isoform B." evidence="7">
    <location>
        <begin position="323"/>
        <end position="327"/>
    </location>
</feature>
<feature type="sequence conflict" description="In Ref. 1; AAB24059." evidence="8" ref="1">
    <original>Q</original>
    <variation>L</variation>
    <location>
        <position position="313"/>
    </location>
</feature>
<keyword id="KW-0025">Alternative splicing</keyword>
<keyword id="KW-0217">Developmental protein</keyword>
<keyword id="KW-0238">DNA-binding</keyword>
<keyword id="KW-0371">Homeobox</keyword>
<keyword id="KW-0539">Nucleus</keyword>
<keyword id="KW-1185">Reference proteome</keyword>
<keyword id="KW-0804">Transcription</keyword>
<keyword id="KW-0805">Transcription regulation</keyword>
<gene>
    <name type="primary">Dll</name>
    <name type="synonym">Ba</name>
    <name type="synonym">BR</name>
    <name type="ORF">CG3629</name>
</gene>
<evidence type="ECO:0000255" key="1">
    <source>
        <dbReference type="PROSITE-ProRule" id="PRU00108"/>
    </source>
</evidence>
<evidence type="ECO:0000256" key="2">
    <source>
        <dbReference type="SAM" id="MobiDB-lite"/>
    </source>
</evidence>
<evidence type="ECO:0000269" key="3">
    <source>
    </source>
</evidence>
<evidence type="ECO:0000269" key="4">
    <source>
    </source>
</evidence>
<evidence type="ECO:0000269" key="5">
    <source>
    </source>
</evidence>
<evidence type="ECO:0000269" key="6">
    <source>
    </source>
</evidence>
<evidence type="ECO:0000303" key="7">
    <source>
    </source>
</evidence>
<evidence type="ECO:0000305" key="8"/>
<protein>
    <recommendedName>
        <fullName>Homeotic protein distal-less</fullName>
    </recommendedName>
    <alternativeName>
        <fullName>Protein brista</fullName>
    </alternativeName>
</protein>
<name>DLL_DROME</name>
<comment type="function">
    <text evidence="3 4 5 6">Transcription factor that plays a role in larval and adult appendage development. Specifies the identity of ventral appendages (including legs and antennae) and suppresses dorsal appendage development. Involved in patterning the distal-proximal limb axis. May control the adhesive properties of cells during limb morphogenesis. Also has a secondary role in the normal patterning of the wing margin.</text>
</comment>
<comment type="subcellular location">
    <subcellularLocation>
        <location evidence="1 3">Nucleus</location>
    </subcellularLocation>
</comment>
<comment type="alternative products">
    <event type="alternative splicing"/>
    <isoform>
        <id>P20009-1</id>
        <name>A</name>
        <sequence type="displayed"/>
    </isoform>
    <isoform>
        <id>P20009-2</id>
        <name>B</name>
        <sequence type="described" ref="VSP_013806"/>
    </isoform>
</comment>
<comment type="tissue specificity">
    <text evidence="3 5 6">Expressed in the embryo in limb primordia of the head and thoracic segments. Expressed in regions of the larval leg, wing, antennal and haltere disks that form the distal-most regions of the mature structures (in the leg this corresponds to the tarsus and the distal tibia). Found in the optic center of the developing larval brain.</text>
</comment>
<proteinExistence type="evidence at transcript level"/>
<dbReference type="EMBL" id="S47947">
    <property type="protein sequence ID" value="AAB24059.1"/>
    <property type="molecule type" value="mRNA"/>
</dbReference>
<dbReference type="EMBL" id="AE013599">
    <property type="protein sequence ID" value="AAF47279.1"/>
    <property type="molecule type" value="Genomic_DNA"/>
</dbReference>
<dbReference type="EMBL" id="AE013599">
    <property type="protein sequence ID" value="AAF47280.1"/>
    <property type="molecule type" value="Genomic_DNA"/>
</dbReference>
<dbReference type="EMBL" id="AY113370">
    <property type="protein sequence ID" value="AAM29375.1"/>
    <property type="molecule type" value="mRNA"/>
</dbReference>
<dbReference type="PIR" id="A44168">
    <property type="entry name" value="A44168"/>
</dbReference>
<dbReference type="RefSeq" id="NP_523857.1">
    <molecule id="P20009-1"/>
    <property type="nucleotide sequence ID" value="NM_079133.2"/>
</dbReference>
<dbReference type="RefSeq" id="NP_726486.1">
    <molecule id="P20009-2"/>
    <property type="nucleotide sequence ID" value="NM_166689.2"/>
</dbReference>
<dbReference type="SMR" id="P20009"/>
<dbReference type="BioGRID" id="63542">
    <property type="interactions" value="63"/>
</dbReference>
<dbReference type="FunCoup" id="P20009">
    <property type="interactions" value="268"/>
</dbReference>
<dbReference type="IntAct" id="P20009">
    <property type="interactions" value="41"/>
</dbReference>
<dbReference type="STRING" id="7227.FBpp0289353"/>
<dbReference type="GlyGen" id="P20009">
    <property type="glycosylation" value="2 sites"/>
</dbReference>
<dbReference type="PaxDb" id="7227-FBpp0289353"/>
<dbReference type="DNASU" id="37973"/>
<dbReference type="EnsemblMetazoa" id="FBtr0072378">
    <molecule id="P20009-2"/>
    <property type="protein sequence ID" value="FBpp0072285"/>
    <property type="gene ID" value="FBgn0000157"/>
</dbReference>
<dbReference type="EnsemblMetazoa" id="FBtr0072379">
    <molecule id="P20009-1"/>
    <property type="protein sequence ID" value="FBpp0072286"/>
    <property type="gene ID" value="FBgn0000157"/>
</dbReference>
<dbReference type="GeneID" id="37973"/>
<dbReference type="KEGG" id="dme:Dmel_CG3629"/>
<dbReference type="AGR" id="FB:FBgn0000157"/>
<dbReference type="CTD" id="37973"/>
<dbReference type="FlyBase" id="FBgn0000157">
    <property type="gene designation" value="Dll"/>
</dbReference>
<dbReference type="VEuPathDB" id="VectorBase:FBgn0000157"/>
<dbReference type="eggNOG" id="KOG0850">
    <property type="taxonomic scope" value="Eukaryota"/>
</dbReference>
<dbReference type="GeneTree" id="ENSGT00940000167651"/>
<dbReference type="HOGENOM" id="CLU_845370_0_0_1"/>
<dbReference type="InParanoid" id="P20009"/>
<dbReference type="OrthoDB" id="6159439at2759"/>
<dbReference type="PhylomeDB" id="P20009"/>
<dbReference type="SignaLink" id="P20009"/>
<dbReference type="BioGRID-ORCS" id="37973">
    <property type="hits" value="0 hits in 3 CRISPR screens"/>
</dbReference>
<dbReference type="GenomeRNAi" id="37973"/>
<dbReference type="PRO" id="PR:P20009"/>
<dbReference type="Proteomes" id="UP000000803">
    <property type="component" value="Chromosome 2R"/>
</dbReference>
<dbReference type="Bgee" id="FBgn0000157">
    <property type="expression patterns" value="Expressed in antennal olfactory receptor neuron of coeloconic sensillum in antenna and 103 other cell types or tissues"/>
</dbReference>
<dbReference type="ExpressionAtlas" id="P20009">
    <property type="expression patterns" value="baseline and differential"/>
</dbReference>
<dbReference type="GO" id="GO:0005634">
    <property type="term" value="C:nucleus"/>
    <property type="evidence" value="ECO:0000314"/>
    <property type="project" value="FlyBase"/>
</dbReference>
<dbReference type="GO" id="GO:0000981">
    <property type="term" value="F:DNA-binding transcription factor activity, RNA polymerase II-specific"/>
    <property type="evidence" value="ECO:0000318"/>
    <property type="project" value="GO_Central"/>
</dbReference>
<dbReference type="GO" id="GO:0000978">
    <property type="term" value="F:RNA polymerase II cis-regulatory region sequence-specific DNA binding"/>
    <property type="evidence" value="ECO:0000318"/>
    <property type="project" value="GO_Central"/>
</dbReference>
<dbReference type="GO" id="GO:0007487">
    <property type="term" value="P:analia development"/>
    <property type="evidence" value="ECO:0000304"/>
    <property type="project" value="FlyBase"/>
</dbReference>
<dbReference type="GO" id="GO:0007469">
    <property type="term" value="P:antennal development"/>
    <property type="evidence" value="ECO:0000315"/>
    <property type="project" value="UniProtKB"/>
</dbReference>
<dbReference type="GO" id="GO:0030154">
    <property type="term" value="P:cell differentiation"/>
    <property type="evidence" value="ECO:0000318"/>
    <property type="project" value="GO_Central"/>
</dbReference>
<dbReference type="GO" id="GO:0048264">
    <property type="term" value="P:determination of ventral identity"/>
    <property type="evidence" value="ECO:0000315"/>
    <property type="project" value="UniProtKB"/>
</dbReference>
<dbReference type="GO" id="GO:0035215">
    <property type="term" value="P:genital disc development"/>
    <property type="evidence" value="ECO:0000304"/>
    <property type="project" value="FlyBase"/>
</dbReference>
<dbReference type="GO" id="GO:0035114">
    <property type="term" value="P:imaginal disc-derived appendage morphogenesis"/>
    <property type="evidence" value="ECO:0000315"/>
    <property type="project" value="UniProtKB"/>
</dbReference>
<dbReference type="GO" id="GO:0007480">
    <property type="term" value="P:imaginal disc-derived leg morphogenesis"/>
    <property type="evidence" value="ECO:0000315"/>
    <property type="project" value="UniProtKB"/>
</dbReference>
<dbReference type="GO" id="GO:0007485">
    <property type="term" value="P:imaginal disc-derived male genitalia development"/>
    <property type="evidence" value="ECO:0000303"/>
    <property type="project" value="FlyBase"/>
</dbReference>
<dbReference type="GO" id="GO:0008587">
    <property type="term" value="P:imaginal disc-derived wing margin morphogenesis"/>
    <property type="evidence" value="ECO:0000315"/>
    <property type="project" value="UniProtKB"/>
</dbReference>
<dbReference type="GO" id="GO:0007479">
    <property type="term" value="P:leg disc proximal/distal pattern formation"/>
    <property type="evidence" value="ECO:0000315"/>
    <property type="project" value="FlyBase"/>
</dbReference>
<dbReference type="GO" id="GO:0016319">
    <property type="term" value="P:mushroom body development"/>
    <property type="evidence" value="ECO:0000315"/>
    <property type="project" value="FlyBase"/>
</dbReference>
<dbReference type="GO" id="GO:0010629">
    <property type="term" value="P:negative regulation of gene expression"/>
    <property type="evidence" value="ECO:0000270"/>
    <property type="project" value="FlyBase"/>
</dbReference>
<dbReference type="GO" id="GO:0045893">
    <property type="term" value="P:positive regulation of DNA-templated transcription"/>
    <property type="evidence" value="ECO:0000315"/>
    <property type="project" value="FlyBase"/>
</dbReference>
<dbReference type="GO" id="GO:0048728">
    <property type="term" value="P:proboscis development"/>
    <property type="evidence" value="ECO:0000315"/>
    <property type="project" value="FlyBase"/>
</dbReference>
<dbReference type="GO" id="GO:0007449">
    <property type="term" value="P:proximal/distal pattern formation, imaginal disc"/>
    <property type="evidence" value="ECO:0000304"/>
    <property type="project" value="FlyBase"/>
</dbReference>
<dbReference type="GO" id="GO:0006357">
    <property type="term" value="P:regulation of transcription by RNA polymerase II"/>
    <property type="evidence" value="ECO:0000318"/>
    <property type="project" value="GO_Central"/>
</dbReference>
<dbReference type="GO" id="GO:0010092">
    <property type="term" value="P:specification of animal organ identity"/>
    <property type="evidence" value="ECO:0000315"/>
    <property type="project" value="UniProtKB"/>
</dbReference>
<dbReference type="CDD" id="cd00086">
    <property type="entry name" value="homeodomain"/>
    <property type="match status" value="1"/>
</dbReference>
<dbReference type="FunFam" id="1.10.10.60:FF:000233">
    <property type="entry name" value="Distal-less, isoform C"/>
    <property type="match status" value="1"/>
</dbReference>
<dbReference type="Gene3D" id="1.10.10.60">
    <property type="entry name" value="Homeodomain-like"/>
    <property type="match status" value="1"/>
</dbReference>
<dbReference type="InterPro" id="IPR050460">
    <property type="entry name" value="Distal-less_Homeobox_TF"/>
</dbReference>
<dbReference type="InterPro" id="IPR001356">
    <property type="entry name" value="HD"/>
</dbReference>
<dbReference type="InterPro" id="IPR020479">
    <property type="entry name" value="HD_metazoa"/>
</dbReference>
<dbReference type="InterPro" id="IPR017970">
    <property type="entry name" value="Homeobox_CS"/>
</dbReference>
<dbReference type="InterPro" id="IPR009057">
    <property type="entry name" value="Homeodomain-like_sf"/>
</dbReference>
<dbReference type="InterPro" id="IPR000047">
    <property type="entry name" value="HTH_motif"/>
</dbReference>
<dbReference type="PANTHER" id="PTHR24327">
    <property type="entry name" value="HOMEOBOX PROTEIN"/>
    <property type="match status" value="1"/>
</dbReference>
<dbReference type="PANTHER" id="PTHR24327:SF81">
    <property type="entry name" value="HOMEOTIC PROTEIN DISTAL-LESS-RELATED"/>
    <property type="match status" value="1"/>
</dbReference>
<dbReference type="Pfam" id="PF00046">
    <property type="entry name" value="Homeodomain"/>
    <property type="match status" value="1"/>
</dbReference>
<dbReference type="PRINTS" id="PR00024">
    <property type="entry name" value="HOMEOBOX"/>
</dbReference>
<dbReference type="PRINTS" id="PR00031">
    <property type="entry name" value="HTHREPRESSR"/>
</dbReference>
<dbReference type="SMART" id="SM00389">
    <property type="entry name" value="HOX"/>
    <property type="match status" value="1"/>
</dbReference>
<dbReference type="SUPFAM" id="SSF46689">
    <property type="entry name" value="Homeodomain-like"/>
    <property type="match status" value="1"/>
</dbReference>
<dbReference type="PROSITE" id="PS00027">
    <property type="entry name" value="HOMEOBOX_1"/>
    <property type="match status" value="1"/>
</dbReference>
<dbReference type="PROSITE" id="PS50071">
    <property type="entry name" value="HOMEOBOX_2"/>
    <property type="match status" value="1"/>
</dbReference>
<organism>
    <name type="scientific">Drosophila melanogaster</name>
    <name type="common">Fruit fly</name>
    <dbReference type="NCBI Taxonomy" id="7227"/>
    <lineage>
        <taxon>Eukaryota</taxon>
        <taxon>Metazoa</taxon>
        <taxon>Ecdysozoa</taxon>
        <taxon>Arthropoda</taxon>
        <taxon>Hexapoda</taxon>
        <taxon>Insecta</taxon>
        <taxon>Pterygota</taxon>
        <taxon>Neoptera</taxon>
        <taxon>Endopterygota</taxon>
        <taxon>Diptera</taxon>
        <taxon>Brachycera</taxon>
        <taxon>Muscomorpha</taxon>
        <taxon>Ephydroidea</taxon>
        <taxon>Drosophilidae</taxon>
        <taxon>Drosophila</taxon>
        <taxon>Sophophora</taxon>
    </lineage>
</organism>
<accession>P20009</accession>
<accession>Q7KVF4</accession>
<accession>Q8MZ41</accession>
<accession>Q9W0Z8</accession>
<accession>Q9W0Z9</accession>
<reference key="1">
    <citation type="journal article" date="1992" name="Cell">
        <title>Homeotic genes of the Bithorax complex repress limb development in the abdomen of the Drosophila embryo through the target gene Distal-less.</title>
        <authorList>
            <person name="Vachon G."/>
            <person name="Cohen B."/>
            <person name="Pfeifle C."/>
            <person name="McGuffin M.E."/>
            <person name="Botas J."/>
            <person name="Cohen S.M."/>
        </authorList>
    </citation>
    <scope>NUCLEOTIDE SEQUENCE [MRNA] (ISOFORM A)</scope>
    <scope>FUNCTION</scope>
    <scope>SUBCELLULAR LOCATION</scope>
    <scope>TISSUE SPECIFICITY</scope>
</reference>
<reference key="2">
    <citation type="journal article" date="2000" name="Science">
        <title>The genome sequence of Drosophila melanogaster.</title>
        <authorList>
            <person name="Adams M.D."/>
            <person name="Celniker S.E."/>
            <person name="Holt R.A."/>
            <person name="Evans C.A."/>
            <person name="Gocayne J.D."/>
            <person name="Amanatides P.G."/>
            <person name="Scherer S.E."/>
            <person name="Li P.W."/>
            <person name="Hoskins R.A."/>
            <person name="Galle R.F."/>
            <person name="George R.A."/>
            <person name="Lewis S.E."/>
            <person name="Richards S."/>
            <person name="Ashburner M."/>
            <person name="Henderson S.N."/>
            <person name="Sutton G.G."/>
            <person name="Wortman J.R."/>
            <person name="Yandell M.D."/>
            <person name="Zhang Q."/>
            <person name="Chen L.X."/>
            <person name="Brandon R.C."/>
            <person name="Rogers Y.-H.C."/>
            <person name="Blazej R.G."/>
            <person name="Champe M."/>
            <person name="Pfeiffer B.D."/>
            <person name="Wan K.H."/>
            <person name="Doyle C."/>
            <person name="Baxter E.G."/>
            <person name="Helt G."/>
            <person name="Nelson C.R."/>
            <person name="Miklos G.L.G."/>
            <person name="Abril J.F."/>
            <person name="Agbayani A."/>
            <person name="An H.-J."/>
            <person name="Andrews-Pfannkoch C."/>
            <person name="Baldwin D."/>
            <person name="Ballew R.M."/>
            <person name="Basu A."/>
            <person name="Baxendale J."/>
            <person name="Bayraktaroglu L."/>
            <person name="Beasley E.M."/>
            <person name="Beeson K.Y."/>
            <person name="Benos P.V."/>
            <person name="Berman B.P."/>
            <person name="Bhandari D."/>
            <person name="Bolshakov S."/>
            <person name="Borkova D."/>
            <person name="Botchan M.R."/>
            <person name="Bouck J."/>
            <person name="Brokstein P."/>
            <person name="Brottier P."/>
            <person name="Burtis K.C."/>
            <person name="Busam D.A."/>
            <person name="Butler H."/>
            <person name="Cadieu E."/>
            <person name="Center A."/>
            <person name="Chandra I."/>
            <person name="Cherry J.M."/>
            <person name="Cawley S."/>
            <person name="Dahlke C."/>
            <person name="Davenport L.B."/>
            <person name="Davies P."/>
            <person name="de Pablos B."/>
            <person name="Delcher A."/>
            <person name="Deng Z."/>
            <person name="Mays A.D."/>
            <person name="Dew I."/>
            <person name="Dietz S.M."/>
            <person name="Dodson K."/>
            <person name="Doup L.E."/>
            <person name="Downes M."/>
            <person name="Dugan-Rocha S."/>
            <person name="Dunkov B.C."/>
            <person name="Dunn P."/>
            <person name="Durbin K.J."/>
            <person name="Evangelista C.C."/>
            <person name="Ferraz C."/>
            <person name="Ferriera S."/>
            <person name="Fleischmann W."/>
            <person name="Fosler C."/>
            <person name="Gabrielian A.E."/>
            <person name="Garg N.S."/>
            <person name="Gelbart W.M."/>
            <person name="Glasser K."/>
            <person name="Glodek A."/>
            <person name="Gong F."/>
            <person name="Gorrell J.H."/>
            <person name="Gu Z."/>
            <person name="Guan P."/>
            <person name="Harris M."/>
            <person name="Harris N.L."/>
            <person name="Harvey D.A."/>
            <person name="Heiman T.J."/>
            <person name="Hernandez J.R."/>
            <person name="Houck J."/>
            <person name="Hostin D."/>
            <person name="Houston K.A."/>
            <person name="Howland T.J."/>
            <person name="Wei M.-H."/>
            <person name="Ibegwam C."/>
            <person name="Jalali M."/>
            <person name="Kalush F."/>
            <person name="Karpen G.H."/>
            <person name="Ke Z."/>
            <person name="Kennison J.A."/>
            <person name="Ketchum K.A."/>
            <person name="Kimmel B.E."/>
            <person name="Kodira C.D."/>
            <person name="Kraft C.L."/>
            <person name="Kravitz S."/>
            <person name="Kulp D."/>
            <person name="Lai Z."/>
            <person name="Lasko P."/>
            <person name="Lei Y."/>
            <person name="Levitsky A.A."/>
            <person name="Li J.H."/>
            <person name="Li Z."/>
            <person name="Liang Y."/>
            <person name="Lin X."/>
            <person name="Liu X."/>
            <person name="Mattei B."/>
            <person name="McIntosh T.C."/>
            <person name="McLeod M.P."/>
            <person name="McPherson D."/>
            <person name="Merkulov G."/>
            <person name="Milshina N.V."/>
            <person name="Mobarry C."/>
            <person name="Morris J."/>
            <person name="Moshrefi A."/>
            <person name="Mount S.M."/>
            <person name="Moy M."/>
            <person name="Murphy B."/>
            <person name="Murphy L."/>
            <person name="Muzny D.M."/>
            <person name="Nelson D.L."/>
            <person name="Nelson D.R."/>
            <person name="Nelson K.A."/>
            <person name="Nixon K."/>
            <person name="Nusskern D.R."/>
            <person name="Pacleb J.M."/>
            <person name="Palazzolo M."/>
            <person name="Pittman G.S."/>
            <person name="Pan S."/>
            <person name="Pollard J."/>
            <person name="Puri V."/>
            <person name="Reese M.G."/>
            <person name="Reinert K."/>
            <person name="Remington K."/>
            <person name="Saunders R.D.C."/>
            <person name="Scheeler F."/>
            <person name="Shen H."/>
            <person name="Shue B.C."/>
            <person name="Siden-Kiamos I."/>
            <person name="Simpson M."/>
            <person name="Skupski M.P."/>
            <person name="Smith T.J."/>
            <person name="Spier E."/>
            <person name="Spradling A.C."/>
            <person name="Stapleton M."/>
            <person name="Strong R."/>
            <person name="Sun E."/>
            <person name="Svirskas R."/>
            <person name="Tector C."/>
            <person name="Turner R."/>
            <person name="Venter E."/>
            <person name="Wang A.H."/>
            <person name="Wang X."/>
            <person name="Wang Z.-Y."/>
            <person name="Wassarman D.A."/>
            <person name="Weinstock G.M."/>
            <person name="Weissenbach J."/>
            <person name="Williams S.M."/>
            <person name="Woodage T."/>
            <person name="Worley K.C."/>
            <person name="Wu D."/>
            <person name="Yang S."/>
            <person name="Yao Q.A."/>
            <person name="Ye J."/>
            <person name="Yeh R.-F."/>
            <person name="Zaveri J.S."/>
            <person name="Zhan M."/>
            <person name="Zhang G."/>
            <person name="Zhao Q."/>
            <person name="Zheng L."/>
            <person name="Zheng X.H."/>
            <person name="Zhong F.N."/>
            <person name="Zhong W."/>
            <person name="Zhou X."/>
            <person name="Zhu S.C."/>
            <person name="Zhu X."/>
            <person name="Smith H.O."/>
            <person name="Gibbs R.A."/>
            <person name="Myers E.W."/>
            <person name="Rubin G.M."/>
            <person name="Venter J.C."/>
        </authorList>
    </citation>
    <scope>NUCLEOTIDE SEQUENCE [LARGE SCALE GENOMIC DNA]</scope>
    <source>
        <strain>Berkeley</strain>
    </source>
</reference>
<reference key="3">
    <citation type="journal article" date="2002" name="Genome Biol.">
        <title>Annotation of the Drosophila melanogaster euchromatic genome: a systematic review.</title>
        <authorList>
            <person name="Misra S."/>
            <person name="Crosby M.A."/>
            <person name="Mungall C.J."/>
            <person name="Matthews B.B."/>
            <person name="Campbell K.S."/>
            <person name="Hradecky P."/>
            <person name="Huang Y."/>
            <person name="Kaminker J.S."/>
            <person name="Millburn G.H."/>
            <person name="Prochnik S.E."/>
            <person name="Smith C.D."/>
            <person name="Tupy J.L."/>
            <person name="Whitfield E.J."/>
            <person name="Bayraktaroglu L."/>
            <person name="Berman B.P."/>
            <person name="Bettencourt B.R."/>
            <person name="Celniker S.E."/>
            <person name="de Grey A.D.N.J."/>
            <person name="Drysdale R.A."/>
            <person name="Harris N.L."/>
            <person name="Richter J."/>
            <person name="Russo S."/>
            <person name="Schroeder A.J."/>
            <person name="Shu S.Q."/>
            <person name="Stapleton M."/>
            <person name="Yamada C."/>
            <person name="Ashburner M."/>
            <person name="Gelbart W.M."/>
            <person name="Rubin G.M."/>
            <person name="Lewis S.E."/>
        </authorList>
    </citation>
    <scope>GENOME REANNOTATION</scope>
    <scope>ALTERNATIVE SPLICING</scope>
    <source>
        <strain>Berkeley</strain>
    </source>
</reference>
<reference key="4">
    <citation type="journal article" date="1989" name="Nature">
        <title>Distal-less encodes a homoeodomain protein required for limb development in Drosophila.</title>
        <authorList>
            <person name="Cohen S.M."/>
            <person name="Broenner G."/>
            <person name="Kuettner F."/>
            <person name="Juergens G."/>
            <person name="Jaeckle H."/>
        </authorList>
    </citation>
    <scope>NUCLEOTIDE SEQUENCE [GENOMIC DNA] OF 124-184</scope>
    <scope>FUNCTION</scope>
</reference>
<reference key="5">
    <citation type="journal article" date="2002" name="Genome Biol.">
        <title>A Drosophila full-length cDNA resource.</title>
        <authorList>
            <person name="Stapleton M."/>
            <person name="Carlson J.W."/>
            <person name="Brokstein P."/>
            <person name="Yu C."/>
            <person name="Champe M."/>
            <person name="George R.A."/>
            <person name="Guarin H."/>
            <person name="Kronmiller B."/>
            <person name="Pacleb J.M."/>
            <person name="Park S."/>
            <person name="Wan K.H."/>
            <person name="Rubin G.M."/>
            <person name="Celniker S.E."/>
        </authorList>
    </citation>
    <scope>NUCLEOTIDE SEQUENCE [LARGE SCALE MRNA] OF 195-327 (ISOFORM B)</scope>
    <source>
        <strain>Berkeley</strain>
        <tissue>Larva</tissue>
        <tissue>Pupae</tissue>
    </source>
</reference>
<reference key="6">
    <citation type="journal article" date="1997" name="Genes Dev.">
        <title>The homeobox gene Distal-less induces ventral appendage development in Drosophila.</title>
        <authorList>
            <person name="Gorfinkiel N."/>
            <person name="Morata G."/>
            <person name="Guerrero I."/>
        </authorList>
    </citation>
    <scope>FUNCTION</scope>
    <scope>TISSUE SPECIFICITY</scope>
</reference>
<reference key="7">
    <citation type="journal article" date="1998" name="Development">
        <title>The roles of the homeobox genes aristaless and Distal-less in patterning the legs and wings of Drosophila.</title>
        <authorList>
            <person name="Campbell G."/>
            <person name="Tomlinson A."/>
        </authorList>
    </citation>
    <scope>FUNCTION</scope>
    <scope>TISSUE SPECIFICITY</scope>
</reference>